<comment type="function">
    <text evidence="1">Catalyzes the formation of phosphatidylethanolamine (PtdEtn) from phosphatidylserine (PtdSer).</text>
</comment>
<comment type="catalytic activity">
    <reaction evidence="1">
        <text>a 1,2-diacyl-sn-glycero-3-phospho-L-serine + H(+) = a 1,2-diacyl-sn-glycero-3-phosphoethanolamine + CO2</text>
        <dbReference type="Rhea" id="RHEA:20828"/>
        <dbReference type="ChEBI" id="CHEBI:15378"/>
        <dbReference type="ChEBI" id="CHEBI:16526"/>
        <dbReference type="ChEBI" id="CHEBI:57262"/>
        <dbReference type="ChEBI" id="CHEBI:64612"/>
        <dbReference type="EC" id="4.1.1.65"/>
    </reaction>
</comment>
<comment type="cofactor">
    <cofactor evidence="1">
        <name>pyruvate</name>
        <dbReference type="ChEBI" id="CHEBI:15361"/>
    </cofactor>
    <text evidence="1">Binds 1 pyruvoyl group covalently per subunit.</text>
</comment>
<comment type="pathway">
    <text evidence="1">Phospholipid metabolism; phosphatidylethanolamine biosynthesis; phosphatidylethanolamine from CDP-diacylglycerol: step 2/2.</text>
</comment>
<comment type="subunit">
    <text evidence="1">Heterodimer of a large membrane-associated beta subunit and a small pyruvoyl-containing alpha subunit.</text>
</comment>
<comment type="subcellular location">
    <subcellularLocation>
        <location evidence="1">Cell membrane</location>
        <topology evidence="1">Peripheral membrane protein</topology>
    </subcellularLocation>
</comment>
<comment type="PTM">
    <text evidence="1">Is synthesized initially as an inactive proenzyme. Formation of the active enzyme involves a self-maturation process in which the active site pyruvoyl group is generated from an internal serine residue via an autocatalytic post-translational modification. Two non-identical subunits are generated from the proenzyme in this reaction, and the pyruvate is formed at the N-terminus of the alpha chain, which is derived from the carboxyl end of the proenzyme. The post-translation cleavage follows an unusual pathway, termed non-hydrolytic serinolysis, in which the side chain hydroxyl group of the serine supplies its oxygen atom to form the C-terminus of the beta chain, while the remainder of the serine residue undergoes an oxidative deamination to produce ammonia and the pyruvoyl prosthetic group on the alpha chain.</text>
</comment>
<comment type="similarity">
    <text evidence="1">Belongs to the phosphatidylserine decarboxylase family. PSD-A subfamily.</text>
</comment>
<protein>
    <recommendedName>
        <fullName evidence="1">Phosphatidylserine decarboxylase proenzyme</fullName>
        <ecNumber evidence="1">4.1.1.65</ecNumber>
    </recommendedName>
    <component>
        <recommendedName>
            <fullName evidence="1">Phosphatidylserine decarboxylase alpha chain</fullName>
        </recommendedName>
    </component>
    <component>
        <recommendedName>
            <fullName evidence="1">Phosphatidylserine decarboxylase beta chain</fullName>
        </recommendedName>
    </component>
</protein>
<feature type="chain" id="PRO_0000042283" description="Phosphatidylserine decarboxylase beta chain" evidence="1">
    <location>
        <begin position="1"/>
        <end position="187"/>
    </location>
</feature>
<feature type="chain" id="PRO_0000042284" description="Phosphatidylserine decarboxylase alpha chain" evidence="1">
    <location>
        <begin position="188"/>
        <end position="231"/>
    </location>
</feature>
<feature type="active site" description="Schiff-base intermediate with substrate; via pyruvic acid" evidence="1">
    <location>
        <position position="188"/>
    </location>
</feature>
<feature type="site" description="Cleavage (non-hydrolytic); by autocatalysis" evidence="1">
    <location>
        <begin position="187"/>
        <end position="188"/>
    </location>
</feature>
<feature type="modified residue" description="Pyruvic acid (Ser); by autocatalysis" evidence="1">
    <location>
        <position position="188"/>
    </location>
</feature>
<gene>
    <name evidence="1" type="primary">psd</name>
    <name type="ordered locus">RF_1046</name>
</gene>
<evidence type="ECO:0000255" key="1">
    <source>
        <dbReference type="HAMAP-Rule" id="MF_00664"/>
    </source>
</evidence>
<keyword id="KW-1003">Cell membrane</keyword>
<keyword id="KW-0210">Decarboxylase</keyword>
<keyword id="KW-0444">Lipid biosynthesis</keyword>
<keyword id="KW-0443">Lipid metabolism</keyword>
<keyword id="KW-0456">Lyase</keyword>
<keyword id="KW-0472">Membrane</keyword>
<keyword id="KW-0594">Phospholipid biosynthesis</keyword>
<keyword id="KW-1208">Phospholipid metabolism</keyword>
<keyword id="KW-0670">Pyruvate</keyword>
<keyword id="KW-0865">Zymogen</keyword>
<accession>Q4UKN0</accession>
<name>PSD_RICFE</name>
<proteinExistence type="inferred from homology"/>
<organism>
    <name type="scientific">Rickettsia felis (strain ATCC VR-1525 / URRWXCal2)</name>
    <name type="common">Rickettsia azadi</name>
    <dbReference type="NCBI Taxonomy" id="315456"/>
    <lineage>
        <taxon>Bacteria</taxon>
        <taxon>Pseudomonadati</taxon>
        <taxon>Pseudomonadota</taxon>
        <taxon>Alphaproteobacteria</taxon>
        <taxon>Rickettsiales</taxon>
        <taxon>Rickettsiaceae</taxon>
        <taxon>Rickettsieae</taxon>
        <taxon>Rickettsia</taxon>
        <taxon>spotted fever group</taxon>
    </lineage>
</organism>
<reference key="1">
    <citation type="journal article" date="2005" name="PLoS Biol.">
        <title>The genome sequence of Rickettsia felis identifies the first putative conjugative plasmid in an obligate intracellular parasite.</title>
        <authorList>
            <person name="Ogata H."/>
            <person name="Renesto P."/>
            <person name="Audic S."/>
            <person name="Robert C."/>
            <person name="Blanc G."/>
            <person name="Fournier P.-E."/>
            <person name="Parinello H."/>
            <person name="Claverie J.-M."/>
            <person name="Raoult D."/>
        </authorList>
    </citation>
    <scope>NUCLEOTIDE SEQUENCE [LARGE SCALE GENOMIC DNA]</scope>
    <source>
        <strain>ATCC VR-1525 / URRWXCal2</strain>
    </source>
</reference>
<dbReference type="EC" id="4.1.1.65" evidence="1"/>
<dbReference type="EMBL" id="CP000053">
    <property type="protein sequence ID" value="AAY61897.1"/>
    <property type="molecule type" value="Genomic_DNA"/>
</dbReference>
<dbReference type="SMR" id="Q4UKN0"/>
<dbReference type="STRING" id="315456.RF_1046"/>
<dbReference type="KEGG" id="rfe:RF_1046"/>
<dbReference type="eggNOG" id="COG0688">
    <property type="taxonomic scope" value="Bacteria"/>
</dbReference>
<dbReference type="HOGENOM" id="CLU_072492_0_0_5"/>
<dbReference type="OrthoDB" id="9790893at2"/>
<dbReference type="UniPathway" id="UPA00558">
    <property type="reaction ID" value="UER00616"/>
</dbReference>
<dbReference type="Proteomes" id="UP000008548">
    <property type="component" value="Chromosome"/>
</dbReference>
<dbReference type="GO" id="GO:0005886">
    <property type="term" value="C:plasma membrane"/>
    <property type="evidence" value="ECO:0007669"/>
    <property type="project" value="UniProtKB-SubCell"/>
</dbReference>
<dbReference type="GO" id="GO:0004609">
    <property type="term" value="F:phosphatidylserine decarboxylase activity"/>
    <property type="evidence" value="ECO:0007669"/>
    <property type="project" value="UniProtKB-UniRule"/>
</dbReference>
<dbReference type="GO" id="GO:0006646">
    <property type="term" value="P:phosphatidylethanolamine biosynthetic process"/>
    <property type="evidence" value="ECO:0007669"/>
    <property type="project" value="UniProtKB-UniRule"/>
</dbReference>
<dbReference type="HAMAP" id="MF_00664">
    <property type="entry name" value="PS_decarb_PSD_A"/>
    <property type="match status" value="1"/>
</dbReference>
<dbReference type="InterPro" id="IPR003817">
    <property type="entry name" value="PS_Dcarbxylase"/>
</dbReference>
<dbReference type="InterPro" id="IPR033175">
    <property type="entry name" value="PSD-A"/>
</dbReference>
<dbReference type="NCBIfam" id="NF003677">
    <property type="entry name" value="PRK05305.1-1"/>
    <property type="match status" value="1"/>
</dbReference>
<dbReference type="NCBIfam" id="NF003678">
    <property type="entry name" value="PRK05305.1-2"/>
    <property type="match status" value="1"/>
</dbReference>
<dbReference type="NCBIfam" id="NF003679">
    <property type="entry name" value="PRK05305.1-3"/>
    <property type="match status" value="1"/>
</dbReference>
<dbReference type="NCBIfam" id="NF003681">
    <property type="entry name" value="PRK05305.2-1"/>
    <property type="match status" value="1"/>
</dbReference>
<dbReference type="NCBIfam" id="NF003685">
    <property type="entry name" value="PRK05305.2-5"/>
    <property type="match status" value="1"/>
</dbReference>
<dbReference type="PANTHER" id="PTHR35809">
    <property type="entry name" value="ARCHAETIDYLSERINE DECARBOXYLASE PROENZYME-RELATED"/>
    <property type="match status" value="1"/>
</dbReference>
<dbReference type="PANTHER" id="PTHR35809:SF1">
    <property type="entry name" value="ARCHAETIDYLSERINE DECARBOXYLASE PROENZYME-RELATED"/>
    <property type="match status" value="1"/>
</dbReference>
<dbReference type="Pfam" id="PF02666">
    <property type="entry name" value="PS_Dcarbxylase"/>
    <property type="match status" value="1"/>
</dbReference>
<sequence length="231" mass="25998">MKQYNDLFKIIHREGYIFIASFALVSFLLASFNEKLGCIGFIATAWCIYFFRNPDRFVPISDDLVISPADGIIQEIKEALPPPELGLGDVEMIRVSIFLNIFNVHVNRIPANGKILALHYNPGKFFNASLDKASIYNERQSVLMETDQGQKIVFVQIAGLIARRIVCDLEEGNEVKTGERYGIIRFGSRVDVYLPLKTALLVSKGQTAIGGETIIADFGRKKTAEFKFERK</sequence>